<reference key="1">
    <citation type="journal article" date="2009" name="PLoS Pathog.">
        <title>Molecular evolutionary consequences of niche restriction in Francisella tularensis, a facultative intracellular pathogen.</title>
        <authorList>
            <person name="Larsson P."/>
            <person name="Elfsmark D."/>
            <person name="Svensson K."/>
            <person name="Wikstroem P."/>
            <person name="Forsman M."/>
            <person name="Brettin T."/>
            <person name="Keim P."/>
            <person name="Johansson A."/>
        </authorList>
    </citation>
    <scope>NUCLEOTIDE SEQUENCE [LARGE SCALE GENOMIC DNA]</scope>
    <source>
        <strain>FSC147</strain>
    </source>
</reference>
<name>OBG_FRATM</name>
<keyword id="KW-0963">Cytoplasm</keyword>
<keyword id="KW-0342">GTP-binding</keyword>
<keyword id="KW-0378">Hydrolase</keyword>
<keyword id="KW-0460">Magnesium</keyword>
<keyword id="KW-0479">Metal-binding</keyword>
<keyword id="KW-0547">Nucleotide-binding</keyword>
<dbReference type="EC" id="3.6.5.-" evidence="1"/>
<dbReference type="EMBL" id="CP000915">
    <property type="protein sequence ID" value="ACD31472.1"/>
    <property type="molecule type" value="Genomic_DNA"/>
</dbReference>
<dbReference type="SMR" id="B2SEA8"/>
<dbReference type="KEGG" id="ftm:FTM_1682"/>
<dbReference type="HOGENOM" id="CLU_011747_2_0_6"/>
<dbReference type="GO" id="GO:0005737">
    <property type="term" value="C:cytoplasm"/>
    <property type="evidence" value="ECO:0007669"/>
    <property type="project" value="UniProtKB-SubCell"/>
</dbReference>
<dbReference type="GO" id="GO:0005525">
    <property type="term" value="F:GTP binding"/>
    <property type="evidence" value="ECO:0007669"/>
    <property type="project" value="UniProtKB-UniRule"/>
</dbReference>
<dbReference type="GO" id="GO:0003924">
    <property type="term" value="F:GTPase activity"/>
    <property type="evidence" value="ECO:0007669"/>
    <property type="project" value="UniProtKB-UniRule"/>
</dbReference>
<dbReference type="GO" id="GO:0000287">
    <property type="term" value="F:magnesium ion binding"/>
    <property type="evidence" value="ECO:0007669"/>
    <property type="project" value="InterPro"/>
</dbReference>
<dbReference type="GO" id="GO:0042254">
    <property type="term" value="P:ribosome biogenesis"/>
    <property type="evidence" value="ECO:0007669"/>
    <property type="project" value="UniProtKB-UniRule"/>
</dbReference>
<dbReference type="CDD" id="cd01898">
    <property type="entry name" value="Obg"/>
    <property type="match status" value="1"/>
</dbReference>
<dbReference type="FunFam" id="2.70.210.12:FF:000001">
    <property type="entry name" value="GTPase Obg"/>
    <property type="match status" value="1"/>
</dbReference>
<dbReference type="Gene3D" id="2.70.210.12">
    <property type="entry name" value="GTP1/OBG domain"/>
    <property type="match status" value="1"/>
</dbReference>
<dbReference type="Gene3D" id="3.40.50.300">
    <property type="entry name" value="P-loop containing nucleotide triphosphate hydrolases"/>
    <property type="match status" value="1"/>
</dbReference>
<dbReference type="HAMAP" id="MF_01454">
    <property type="entry name" value="GTPase_Obg"/>
    <property type="match status" value="1"/>
</dbReference>
<dbReference type="InterPro" id="IPR031167">
    <property type="entry name" value="G_OBG"/>
</dbReference>
<dbReference type="InterPro" id="IPR006073">
    <property type="entry name" value="GTP-bd"/>
</dbReference>
<dbReference type="InterPro" id="IPR014100">
    <property type="entry name" value="GTP-bd_Obg/CgtA"/>
</dbReference>
<dbReference type="InterPro" id="IPR006074">
    <property type="entry name" value="GTP1-OBG_CS"/>
</dbReference>
<dbReference type="InterPro" id="IPR006169">
    <property type="entry name" value="GTP1_OBG_dom"/>
</dbReference>
<dbReference type="InterPro" id="IPR036726">
    <property type="entry name" value="GTP1_OBG_dom_sf"/>
</dbReference>
<dbReference type="InterPro" id="IPR045086">
    <property type="entry name" value="OBG_GTPase"/>
</dbReference>
<dbReference type="InterPro" id="IPR027417">
    <property type="entry name" value="P-loop_NTPase"/>
</dbReference>
<dbReference type="NCBIfam" id="TIGR02729">
    <property type="entry name" value="Obg_CgtA"/>
    <property type="match status" value="1"/>
</dbReference>
<dbReference type="NCBIfam" id="NF008955">
    <property type="entry name" value="PRK12297.1"/>
    <property type="match status" value="1"/>
</dbReference>
<dbReference type="NCBIfam" id="NF008956">
    <property type="entry name" value="PRK12299.1"/>
    <property type="match status" value="1"/>
</dbReference>
<dbReference type="PANTHER" id="PTHR11702">
    <property type="entry name" value="DEVELOPMENTALLY REGULATED GTP-BINDING PROTEIN-RELATED"/>
    <property type="match status" value="1"/>
</dbReference>
<dbReference type="PANTHER" id="PTHR11702:SF31">
    <property type="entry name" value="MITOCHONDRIAL RIBOSOME-ASSOCIATED GTPASE 2"/>
    <property type="match status" value="1"/>
</dbReference>
<dbReference type="Pfam" id="PF01018">
    <property type="entry name" value="GTP1_OBG"/>
    <property type="match status" value="1"/>
</dbReference>
<dbReference type="Pfam" id="PF01926">
    <property type="entry name" value="MMR_HSR1"/>
    <property type="match status" value="1"/>
</dbReference>
<dbReference type="PIRSF" id="PIRSF002401">
    <property type="entry name" value="GTP_bd_Obg/CgtA"/>
    <property type="match status" value="1"/>
</dbReference>
<dbReference type="PRINTS" id="PR00326">
    <property type="entry name" value="GTP1OBG"/>
</dbReference>
<dbReference type="SUPFAM" id="SSF82051">
    <property type="entry name" value="Obg GTP-binding protein N-terminal domain"/>
    <property type="match status" value="1"/>
</dbReference>
<dbReference type="SUPFAM" id="SSF52540">
    <property type="entry name" value="P-loop containing nucleoside triphosphate hydrolases"/>
    <property type="match status" value="1"/>
</dbReference>
<dbReference type="PROSITE" id="PS51710">
    <property type="entry name" value="G_OBG"/>
    <property type="match status" value="1"/>
</dbReference>
<dbReference type="PROSITE" id="PS00905">
    <property type="entry name" value="GTP1_OBG"/>
    <property type="match status" value="1"/>
</dbReference>
<dbReference type="PROSITE" id="PS51883">
    <property type="entry name" value="OBG"/>
    <property type="match status" value="1"/>
</dbReference>
<comment type="function">
    <text evidence="1">An essential GTPase which binds GTP, GDP and possibly (p)ppGpp with moderate affinity, with high nucleotide exchange rates and a fairly low GTP hydrolysis rate. Plays a role in control of the cell cycle, stress response, ribosome biogenesis and in those bacteria that undergo differentiation, in morphogenesis control.</text>
</comment>
<comment type="cofactor">
    <cofactor evidence="1">
        <name>Mg(2+)</name>
        <dbReference type="ChEBI" id="CHEBI:18420"/>
    </cofactor>
</comment>
<comment type="subunit">
    <text evidence="1">Monomer.</text>
</comment>
<comment type="subcellular location">
    <subcellularLocation>
        <location evidence="1">Cytoplasm</location>
    </subcellularLocation>
</comment>
<comment type="similarity">
    <text evidence="1">Belongs to the TRAFAC class OBG-HflX-like GTPase superfamily. OBG GTPase family.</text>
</comment>
<gene>
    <name evidence="1" type="primary">obg</name>
    <name type="ordered locus">FTM_1682</name>
</gene>
<proteinExistence type="inferred from homology"/>
<organism>
    <name type="scientific">Francisella tularensis subsp. mediasiatica (strain FSC147)</name>
    <dbReference type="NCBI Taxonomy" id="441952"/>
    <lineage>
        <taxon>Bacteria</taxon>
        <taxon>Pseudomonadati</taxon>
        <taxon>Pseudomonadota</taxon>
        <taxon>Gammaproteobacteria</taxon>
        <taxon>Thiotrichales</taxon>
        <taxon>Francisellaceae</taxon>
        <taxon>Francisella</taxon>
    </lineage>
</organism>
<sequence>MRFVDEVVIKLQAGKGGNGCVSFRREKYVPRGGPDGGDGGNGGSIYLKADENVNTLIDYRYKREYYAENGRPGEGRNCYGKAGEDLYLVVPVGTSVFDIDTNKKIGEVLQHGQTFKLVSGGKRGIGNTHFKSSTNQAPRKFTLGEEGEYKEVRLELNLLADVALLGLPNAGKSTLIRSVSEATPKVADYPFTTMYPHLGVVKVGVDSFVMADIPGVIEGAAEGAGLGLRFLKHLTRARCVLHVVDICPFSESDPVENYFAVEKELEKYSQELFDKPRFLVINKIDLLADKVEQKCQEFVEQIGYQGNYYTISAAMKKGTDELAKKLNEFLQKQE</sequence>
<feature type="chain" id="PRO_0000385939" description="GTPase Obg">
    <location>
        <begin position="1"/>
        <end position="334"/>
    </location>
</feature>
<feature type="domain" description="Obg" evidence="2">
    <location>
        <begin position="1"/>
        <end position="159"/>
    </location>
</feature>
<feature type="domain" description="OBG-type G" evidence="1">
    <location>
        <begin position="160"/>
        <end position="331"/>
    </location>
</feature>
<feature type="binding site" evidence="1">
    <location>
        <begin position="166"/>
        <end position="173"/>
    </location>
    <ligand>
        <name>GTP</name>
        <dbReference type="ChEBI" id="CHEBI:37565"/>
    </ligand>
</feature>
<feature type="binding site" evidence="1">
    <location>
        <position position="173"/>
    </location>
    <ligand>
        <name>Mg(2+)</name>
        <dbReference type="ChEBI" id="CHEBI:18420"/>
    </ligand>
</feature>
<feature type="binding site" evidence="1">
    <location>
        <begin position="191"/>
        <end position="195"/>
    </location>
    <ligand>
        <name>GTP</name>
        <dbReference type="ChEBI" id="CHEBI:37565"/>
    </ligand>
</feature>
<feature type="binding site" evidence="1">
    <location>
        <position position="193"/>
    </location>
    <ligand>
        <name>Mg(2+)</name>
        <dbReference type="ChEBI" id="CHEBI:18420"/>
    </ligand>
</feature>
<feature type="binding site" evidence="1">
    <location>
        <begin position="212"/>
        <end position="215"/>
    </location>
    <ligand>
        <name>GTP</name>
        <dbReference type="ChEBI" id="CHEBI:37565"/>
    </ligand>
</feature>
<feature type="binding site" evidence="1">
    <location>
        <begin position="282"/>
        <end position="285"/>
    </location>
    <ligand>
        <name>GTP</name>
        <dbReference type="ChEBI" id="CHEBI:37565"/>
    </ligand>
</feature>
<feature type="binding site" evidence="1">
    <location>
        <begin position="312"/>
        <end position="314"/>
    </location>
    <ligand>
        <name>GTP</name>
        <dbReference type="ChEBI" id="CHEBI:37565"/>
    </ligand>
</feature>
<accession>B2SEA8</accession>
<evidence type="ECO:0000255" key="1">
    <source>
        <dbReference type="HAMAP-Rule" id="MF_01454"/>
    </source>
</evidence>
<evidence type="ECO:0000255" key="2">
    <source>
        <dbReference type="PROSITE-ProRule" id="PRU01231"/>
    </source>
</evidence>
<protein>
    <recommendedName>
        <fullName evidence="1">GTPase Obg</fullName>
        <ecNumber evidence="1">3.6.5.-</ecNumber>
    </recommendedName>
    <alternativeName>
        <fullName evidence="1">GTP-binding protein Obg</fullName>
    </alternativeName>
</protein>